<keyword id="KW-0004">4Fe-4S</keyword>
<keyword id="KW-0067">ATP-binding</keyword>
<keyword id="KW-0963">Cytoplasm</keyword>
<keyword id="KW-0408">Iron</keyword>
<keyword id="KW-0411">Iron-sulfur</keyword>
<keyword id="KW-0460">Magnesium</keyword>
<keyword id="KW-0479">Metal-binding</keyword>
<keyword id="KW-0547">Nucleotide-binding</keyword>
<keyword id="KW-0694">RNA-binding</keyword>
<keyword id="KW-0808">Transferase</keyword>
<keyword id="KW-0819">tRNA processing</keyword>
<keyword id="KW-0820">tRNA-binding</keyword>
<accession>B4T6P5</accession>
<comment type="function">
    <text evidence="1">Catalyzes the ATP-dependent 2-thiolation of cytidine in position 32 of tRNA, to form 2-thiocytidine (s(2)C32). The sulfur atoms are provided by the cysteine/cysteine desulfurase (IscS) system.</text>
</comment>
<comment type="catalytic activity">
    <reaction evidence="1">
        <text>cytidine(32) in tRNA + S-sulfanyl-L-cysteinyl-[cysteine desulfurase] + AH2 + ATP = 2-thiocytidine(32) in tRNA + L-cysteinyl-[cysteine desulfurase] + A + AMP + diphosphate + H(+)</text>
        <dbReference type="Rhea" id="RHEA:57048"/>
        <dbReference type="Rhea" id="RHEA-COMP:10288"/>
        <dbReference type="Rhea" id="RHEA-COMP:12157"/>
        <dbReference type="Rhea" id="RHEA-COMP:12158"/>
        <dbReference type="Rhea" id="RHEA-COMP:14821"/>
        <dbReference type="ChEBI" id="CHEBI:13193"/>
        <dbReference type="ChEBI" id="CHEBI:15378"/>
        <dbReference type="ChEBI" id="CHEBI:17499"/>
        <dbReference type="ChEBI" id="CHEBI:29950"/>
        <dbReference type="ChEBI" id="CHEBI:30616"/>
        <dbReference type="ChEBI" id="CHEBI:33019"/>
        <dbReference type="ChEBI" id="CHEBI:61963"/>
        <dbReference type="ChEBI" id="CHEBI:82748"/>
        <dbReference type="ChEBI" id="CHEBI:141453"/>
        <dbReference type="ChEBI" id="CHEBI:456215"/>
    </reaction>
    <physiologicalReaction direction="left-to-right" evidence="1">
        <dbReference type="Rhea" id="RHEA:57049"/>
    </physiologicalReaction>
</comment>
<comment type="cofactor">
    <cofactor evidence="1">
        <name>Mg(2+)</name>
        <dbReference type="ChEBI" id="CHEBI:18420"/>
    </cofactor>
</comment>
<comment type="cofactor">
    <cofactor evidence="1">
        <name>[4Fe-4S] cluster</name>
        <dbReference type="ChEBI" id="CHEBI:49883"/>
    </cofactor>
    <text evidence="1">Binds 1 [4Fe-4S] cluster per subunit. The cluster is chelated by three Cys residues, the fourth Fe has a free coordination site that may bind a sulfur atom transferred from the persulfide of IscS.</text>
</comment>
<comment type="pathway">
    <text evidence="1">tRNA modification.</text>
</comment>
<comment type="subunit">
    <text evidence="1">Homodimer.</text>
</comment>
<comment type="subcellular location">
    <subcellularLocation>
        <location evidence="1">Cytoplasm</location>
    </subcellularLocation>
</comment>
<comment type="miscellaneous">
    <text evidence="1">The thiolation reaction likely consists of two steps: a first activation step by ATP to form an adenylated intermediate of the target base of tRNA, and a second nucleophilic substitution step of the sulfur (S) atom supplied by the hydrosulfide attached to the Fe-S cluster.</text>
</comment>
<comment type="similarity">
    <text evidence="1">Belongs to the TtcA family.</text>
</comment>
<protein>
    <recommendedName>
        <fullName evidence="1">tRNA-cytidine(32) 2-sulfurtransferase</fullName>
        <ecNumber evidence="1">2.8.1.-</ecNumber>
    </recommendedName>
    <alternativeName>
        <fullName evidence="1">Two-thiocytidine biosynthesis protein A</fullName>
    </alternativeName>
    <alternativeName>
        <fullName evidence="1">tRNA 2-thiocytidine biosynthesis protein TtcA</fullName>
    </alternativeName>
</protein>
<dbReference type="EC" id="2.8.1.-" evidence="1"/>
<dbReference type="EMBL" id="CP001113">
    <property type="protein sequence ID" value="ACF62098.1"/>
    <property type="molecule type" value="Genomic_DNA"/>
</dbReference>
<dbReference type="RefSeq" id="WP_001156217.1">
    <property type="nucleotide sequence ID" value="NZ_CCMR01000003.1"/>
</dbReference>
<dbReference type="SMR" id="B4T6P5"/>
<dbReference type="KEGG" id="see:SNSL254_A1774"/>
<dbReference type="HOGENOM" id="CLU_026481_0_0_6"/>
<dbReference type="Proteomes" id="UP000008824">
    <property type="component" value="Chromosome"/>
</dbReference>
<dbReference type="GO" id="GO:0005737">
    <property type="term" value="C:cytoplasm"/>
    <property type="evidence" value="ECO:0007669"/>
    <property type="project" value="UniProtKB-SubCell"/>
</dbReference>
<dbReference type="GO" id="GO:0051539">
    <property type="term" value="F:4 iron, 4 sulfur cluster binding"/>
    <property type="evidence" value="ECO:0007669"/>
    <property type="project" value="UniProtKB-UniRule"/>
</dbReference>
<dbReference type="GO" id="GO:0005524">
    <property type="term" value="F:ATP binding"/>
    <property type="evidence" value="ECO:0007669"/>
    <property type="project" value="UniProtKB-UniRule"/>
</dbReference>
<dbReference type="GO" id="GO:0000287">
    <property type="term" value="F:magnesium ion binding"/>
    <property type="evidence" value="ECO:0007669"/>
    <property type="project" value="UniProtKB-UniRule"/>
</dbReference>
<dbReference type="GO" id="GO:0016783">
    <property type="term" value="F:sulfurtransferase activity"/>
    <property type="evidence" value="ECO:0007669"/>
    <property type="project" value="UniProtKB-UniRule"/>
</dbReference>
<dbReference type="GO" id="GO:0000049">
    <property type="term" value="F:tRNA binding"/>
    <property type="evidence" value="ECO:0007669"/>
    <property type="project" value="UniProtKB-KW"/>
</dbReference>
<dbReference type="GO" id="GO:0034227">
    <property type="term" value="P:tRNA thio-modification"/>
    <property type="evidence" value="ECO:0007669"/>
    <property type="project" value="UniProtKB-UniRule"/>
</dbReference>
<dbReference type="CDD" id="cd24138">
    <property type="entry name" value="TtcA-like"/>
    <property type="match status" value="1"/>
</dbReference>
<dbReference type="FunFam" id="3.40.50.620:FF:000046">
    <property type="entry name" value="tRNA-cytidine(32) 2-sulfurtransferase"/>
    <property type="match status" value="1"/>
</dbReference>
<dbReference type="Gene3D" id="3.40.50.620">
    <property type="entry name" value="HUPs"/>
    <property type="match status" value="1"/>
</dbReference>
<dbReference type="HAMAP" id="MF_01850">
    <property type="entry name" value="TtcA"/>
    <property type="match status" value="1"/>
</dbReference>
<dbReference type="InterPro" id="IPR014729">
    <property type="entry name" value="Rossmann-like_a/b/a_fold"/>
</dbReference>
<dbReference type="InterPro" id="IPR011063">
    <property type="entry name" value="TilS/TtcA_N"/>
</dbReference>
<dbReference type="InterPro" id="IPR012089">
    <property type="entry name" value="tRNA_Cyd_32_2_STrfase"/>
</dbReference>
<dbReference type="InterPro" id="IPR035107">
    <property type="entry name" value="tRNA_thiolation_TtcA_Ctu1"/>
</dbReference>
<dbReference type="NCBIfam" id="NF007972">
    <property type="entry name" value="PRK10696.1"/>
    <property type="match status" value="1"/>
</dbReference>
<dbReference type="PANTHER" id="PTHR43686:SF1">
    <property type="entry name" value="AMINOTRAN_5 DOMAIN-CONTAINING PROTEIN"/>
    <property type="match status" value="1"/>
</dbReference>
<dbReference type="PANTHER" id="PTHR43686">
    <property type="entry name" value="SULFURTRANSFERASE-RELATED"/>
    <property type="match status" value="1"/>
</dbReference>
<dbReference type="Pfam" id="PF01171">
    <property type="entry name" value="ATP_bind_3"/>
    <property type="match status" value="1"/>
</dbReference>
<dbReference type="PIRSF" id="PIRSF004976">
    <property type="entry name" value="ATPase_YdaO"/>
    <property type="match status" value="1"/>
</dbReference>
<dbReference type="SUPFAM" id="SSF52402">
    <property type="entry name" value="Adenine nucleotide alpha hydrolases-like"/>
    <property type="match status" value="1"/>
</dbReference>
<sequence>MQEIQKNTKKEQYNLNKLQKRLRRNVGEAIADFNMIEEGDRIMVCLSGGKDSYTMLEILRNLQQSAPINFSLVAVNLDQKQPGFPEHILPAYLEQLGVEYKIVEENTYGIVKEKIPEGKTTCSLCSRLRRGILYRTATELGATKIALGHHRDDILQTLFLNMFYGGKMKGMPPKLMSDDGKHIVIRPLAYCREKDIVRFAEAKAFPIIPCNLCGSQPNLQRQVIADMLRDWDKRYPGRIETMFSAMQNVVPSHLCDTNLFDFKGITHGSEVVDGGDLAFDREEIPLQPAGWQPEEDDTALEALRLDVIEVK</sequence>
<evidence type="ECO:0000255" key="1">
    <source>
        <dbReference type="HAMAP-Rule" id="MF_01850"/>
    </source>
</evidence>
<gene>
    <name evidence="1" type="primary">ttcA</name>
    <name type="ordered locus">SNSL254_A1774</name>
</gene>
<name>TTCA_SALNS</name>
<feature type="chain" id="PRO_1000188658" description="tRNA-cytidine(32) 2-sulfurtransferase">
    <location>
        <begin position="1"/>
        <end position="311"/>
    </location>
</feature>
<feature type="short sequence motif" description="PP-loop motif" evidence="1">
    <location>
        <begin position="47"/>
        <end position="52"/>
    </location>
</feature>
<feature type="binding site" evidence="1">
    <location>
        <position position="122"/>
    </location>
    <ligand>
        <name>[4Fe-4S] cluster</name>
        <dbReference type="ChEBI" id="CHEBI:49883"/>
    </ligand>
</feature>
<feature type="binding site" evidence="1">
    <location>
        <position position="125"/>
    </location>
    <ligand>
        <name>[4Fe-4S] cluster</name>
        <dbReference type="ChEBI" id="CHEBI:49883"/>
    </ligand>
</feature>
<feature type="binding site" evidence="1">
    <location>
        <position position="213"/>
    </location>
    <ligand>
        <name>[4Fe-4S] cluster</name>
        <dbReference type="ChEBI" id="CHEBI:49883"/>
    </ligand>
</feature>
<proteinExistence type="inferred from homology"/>
<organism>
    <name type="scientific">Salmonella newport (strain SL254)</name>
    <dbReference type="NCBI Taxonomy" id="423368"/>
    <lineage>
        <taxon>Bacteria</taxon>
        <taxon>Pseudomonadati</taxon>
        <taxon>Pseudomonadota</taxon>
        <taxon>Gammaproteobacteria</taxon>
        <taxon>Enterobacterales</taxon>
        <taxon>Enterobacteriaceae</taxon>
        <taxon>Salmonella</taxon>
    </lineage>
</organism>
<reference key="1">
    <citation type="journal article" date="2011" name="J. Bacteriol.">
        <title>Comparative genomics of 28 Salmonella enterica isolates: evidence for CRISPR-mediated adaptive sublineage evolution.</title>
        <authorList>
            <person name="Fricke W.F."/>
            <person name="Mammel M.K."/>
            <person name="McDermott P.F."/>
            <person name="Tartera C."/>
            <person name="White D.G."/>
            <person name="Leclerc J.E."/>
            <person name="Ravel J."/>
            <person name="Cebula T.A."/>
        </authorList>
    </citation>
    <scope>NUCLEOTIDE SEQUENCE [LARGE SCALE GENOMIC DNA]</scope>
    <source>
        <strain>SL254</strain>
    </source>
</reference>